<comment type="function">
    <text evidence="1">Polymerizes as an extended structure around the baseplate-tail tube complex. During ejection, the sheath shifts to a contracted form, thereby making the inner tail tube protrude through the host cell envelope.</text>
</comment>
<comment type="subunit">
    <text evidence="1">Homomultimer.</text>
</comment>
<comment type="subcellular location">
    <subcellularLocation>
        <location evidence="1">Virion</location>
    </subcellularLocation>
    <subcellularLocation>
        <location evidence="1">Host cytoplasm</location>
    </subcellularLocation>
    <text evidence="1">Tail.</text>
</comment>
<comment type="similarity">
    <text evidence="2">Belongs to the myoviridae tail sheath protein family.</text>
</comment>
<name>TSP_BPTWO</name>
<organism>
    <name type="scientific">Staphylococcus phage Twort (strain DSM 17442 / HER 48)</name>
    <name type="common">Bacteriophage Twort</name>
    <dbReference type="NCBI Taxonomy" id="2908167"/>
    <lineage>
        <taxon>Viruses</taxon>
        <taxon>Duplodnaviria</taxon>
        <taxon>Heunggongvirae</taxon>
        <taxon>Uroviricota</taxon>
        <taxon>Caudoviricetes</taxon>
        <taxon>Herelleviridae</taxon>
        <taxon>Twortvirinae</taxon>
        <taxon>Twortvirus</taxon>
        <taxon>Twortvirus twort</taxon>
    </lineage>
</organism>
<organismHost>
    <name type="scientific">Twortvirus twort</name>
    <dbReference type="NCBI Taxonomy" id="55510"/>
</organismHost>
<protein>
    <recommendedName>
        <fullName>Tail sheath protein</fullName>
        <shortName>TSP</shortName>
    </recommendedName>
</protein>
<dbReference type="EMBL" id="AY954970">
    <property type="protein sequence ID" value="AAX92307.1"/>
    <property type="molecule type" value="Genomic_DNA"/>
</dbReference>
<dbReference type="RefSeq" id="YP_238553.1">
    <property type="nucleotide sequence ID" value="NC_007021.1"/>
</dbReference>
<dbReference type="SMR" id="Q4Z9F2"/>
<dbReference type="GeneID" id="5130368"/>
<dbReference type="KEGG" id="vg:5130368"/>
<dbReference type="Proteomes" id="UP000001466">
    <property type="component" value="Segment"/>
</dbReference>
<dbReference type="GO" id="GO:0030430">
    <property type="term" value="C:host cell cytoplasm"/>
    <property type="evidence" value="ECO:0007669"/>
    <property type="project" value="UniProtKB-SubCell"/>
</dbReference>
<dbReference type="GO" id="GO:0098027">
    <property type="term" value="C:virus tail, sheath"/>
    <property type="evidence" value="ECO:0007669"/>
    <property type="project" value="UniProtKB-KW"/>
</dbReference>
<dbReference type="GO" id="GO:0099000">
    <property type="term" value="P:symbiont genome ejection through host cell envelope, contractile tail mechanism"/>
    <property type="evidence" value="ECO:0007669"/>
    <property type="project" value="UniProtKB-KW"/>
</dbReference>
<dbReference type="InterPro" id="IPR035089">
    <property type="entry name" value="Phage_sheath_subtilisin"/>
</dbReference>
<dbReference type="Pfam" id="PF04984">
    <property type="entry name" value="Phage_sheath_1"/>
    <property type="match status" value="1"/>
</dbReference>
<sequence>MAKDIFPRRPIQRPHASIEVDSSGIGGSASNSEKILCLIGKAEGGEPNTVYQVRNYAQAKSVFRSGELLDAIELAWGSNPQYTAGKILAMRVEDAKASQLEKGGLRVTSKIFGSVSNDIQVALEKNTITDSLRLRVVFQKDNYQEVFDNLGNIFSINYKGEGEKATFSVEKDKETQEAKRLVLKVDEKEVKAYELNGGAYSFTNEIITDINELPDFEAKLSPFGDKNLESRKLDEATDVDIKGKAVYVKAVFGDIENQTQYNQYVKFEQLPEQASEPSDVEVHAETESATVTATSKPKAIEPFELTKLSGGTNGEPPTSWSAKLEKFKNEGGYYIVPLTDRQSVHSEVATFVKNRSDAGEPMRAIVGGGTSETKEKLFGRQAILNNPRVALVANSGKFVMGNGRILQAPAYMVASAVAGLVSGLDIGESITFKPLFVNSLDKVYESEELDELNENGIITIEFVRNRMTTMFRIVDDVTTFPDKNDPVKSEMALGEANDFLVSELKILLEEQYIGTRTINTSASQIKDFVQSYLGRKKRDNEIQDFPPEDVQVIIEGNEARISLTIFPIRALKKISVSLVYRQQTLQA</sequence>
<evidence type="ECO:0000250" key="1">
    <source>
        <dbReference type="UniProtKB" id="P79678"/>
    </source>
</evidence>
<evidence type="ECO:0000305" key="2"/>
<accession>Q4Z9F2</accession>
<feature type="chain" id="PRO_0000432777" description="Tail sheath protein">
    <location>
        <begin position="1"/>
        <end position="587"/>
    </location>
</feature>
<reference key="1">
    <citation type="journal article" date="2005" name="Proc. Natl. Acad. Sci. U.S.A.">
        <title>The complete genomes and proteomes of 27 Staphylococcus aureus bacteriophages.</title>
        <authorList>
            <person name="Kwan T."/>
            <person name="Liu J."/>
            <person name="DuBow M."/>
            <person name="Gros P."/>
            <person name="Pelletier J."/>
        </authorList>
    </citation>
    <scope>NUCLEOTIDE SEQUENCE [LARGE SCALE GENOMIC DNA]</scope>
</reference>
<keyword id="KW-1035">Host cytoplasm</keyword>
<keyword id="KW-1185">Reference proteome</keyword>
<keyword id="KW-1242">Viral contractile tail ejection system</keyword>
<keyword id="KW-1171">Viral genome ejection through host cell envelope</keyword>
<keyword id="KW-1162">Viral penetration into host cytoplasm</keyword>
<keyword id="KW-1227">Viral tail protein</keyword>
<keyword id="KW-1229">Viral tail sheath protein</keyword>
<keyword id="KW-0946">Virion</keyword>
<keyword id="KW-1160">Virus entry into host cell</keyword>
<proteinExistence type="inferred from homology"/>